<dbReference type="EC" id="2.3.1.191" evidence="1"/>
<dbReference type="EMBL" id="AM884177">
    <property type="protein sequence ID" value="CAP06889.1"/>
    <property type="molecule type" value="Genomic_DNA"/>
</dbReference>
<dbReference type="RefSeq" id="WP_012263629.1">
    <property type="nucleotide sequence ID" value="NC_010280.2"/>
</dbReference>
<dbReference type="SMR" id="B0BBM4"/>
<dbReference type="KEGG" id="ctl:CTLon_0491"/>
<dbReference type="HOGENOM" id="CLU_049865_0_0_0"/>
<dbReference type="UniPathway" id="UPA00973"/>
<dbReference type="Proteomes" id="UP001154401">
    <property type="component" value="Chromosome"/>
</dbReference>
<dbReference type="GO" id="GO:0016020">
    <property type="term" value="C:membrane"/>
    <property type="evidence" value="ECO:0007669"/>
    <property type="project" value="GOC"/>
</dbReference>
<dbReference type="GO" id="GO:0016410">
    <property type="term" value="F:N-acyltransferase activity"/>
    <property type="evidence" value="ECO:0007669"/>
    <property type="project" value="InterPro"/>
</dbReference>
<dbReference type="GO" id="GO:0009245">
    <property type="term" value="P:lipid A biosynthetic process"/>
    <property type="evidence" value="ECO:0007669"/>
    <property type="project" value="UniProtKB-UniRule"/>
</dbReference>
<dbReference type="CDD" id="cd03352">
    <property type="entry name" value="LbH_LpxD"/>
    <property type="match status" value="1"/>
</dbReference>
<dbReference type="Gene3D" id="1.20.5.170">
    <property type="match status" value="1"/>
</dbReference>
<dbReference type="Gene3D" id="2.160.10.10">
    <property type="entry name" value="Hexapeptide repeat proteins"/>
    <property type="match status" value="1"/>
</dbReference>
<dbReference type="Gene3D" id="3.40.1390.10">
    <property type="entry name" value="MurE/MurF, N-terminal domain"/>
    <property type="match status" value="1"/>
</dbReference>
<dbReference type="HAMAP" id="MF_00523">
    <property type="entry name" value="LpxD"/>
    <property type="match status" value="1"/>
</dbReference>
<dbReference type="InterPro" id="IPR001451">
    <property type="entry name" value="Hexapep"/>
</dbReference>
<dbReference type="InterPro" id="IPR007691">
    <property type="entry name" value="LpxD"/>
</dbReference>
<dbReference type="InterPro" id="IPR011004">
    <property type="entry name" value="Trimer_LpxA-like_sf"/>
</dbReference>
<dbReference type="InterPro" id="IPR020573">
    <property type="entry name" value="UDP_GlcNAc_AcTrfase_non-rep"/>
</dbReference>
<dbReference type="NCBIfam" id="TIGR01853">
    <property type="entry name" value="lipid_A_lpxD"/>
    <property type="match status" value="1"/>
</dbReference>
<dbReference type="NCBIfam" id="NF002060">
    <property type="entry name" value="PRK00892.1"/>
    <property type="match status" value="1"/>
</dbReference>
<dbReference type="PANTHER" id="PTHR43378">
    <property type="entry name" value="UDP-3-O-ACYLGLUCOSAMINE N-ACYLTRANSFERASE"/>
    <property type="match status" value="1"/>
</dbReference>
<dbReference type="PANTHER" id="PTHR43378:SF2">
    <property type="entry name" value="UDP-3-O-ACYLGLUCOSAMINE N-ACYLTRANSFERASE 1, MITOCHONDRIAL-RELATED"/>
    <property type="match status" value="1"/>
</dbReference>
<dbReference type="Pfam" id="PF00132">
    <property type="entry name" value="Hexapep"/>
    <property type="match status" value="2"/>
</dbReference>
<dbReference type="Pfam" id="PF04613">
    <property type="entry name" value="LpxD"/>
    <property type="match status" value="1"/>
</dbReference>
<dbReference type="SUPFAM" id="SSF51161">
    <property type="entry name" value="Trimeric LpxA-like enzymes"/>
    <property type="match status" value="1"/>
</dbReference>
<accession>B0BBM4</accession>
<reference key="1">
    <citation type="journal article" date="2008" name="Genome Res.">
        <title>Chlamydia trachomatis: genome sequence analysis of lymphogranuloma venereum isolates.</title>
        <authorList>
            <person name="Thomson N.R."/>
            <person name="Holden M.T.G."/>
            <person name="Carder C."/>
            <person name="Lennard N."/>
            <person name="Lockey S.J."/>
            <person name="Marsh P."/>
            <person name="Skipp P."/>
            <person name="O'Connor C.D."/>
            <person name="Goodhead I."/>
            <person name="Norbertzcak H."/>
            <person name="Harris B."/>
            <person name="Ormond D."/>
            <person name="Rance R."/>
            <person name="Quail M.A."/>
            <person name="Parkhill J."/>
            <person name="Stephens R.S."/>
            <person name="Clarke I.N."/>
        </authorList>
    </citation>
    <scope>NUCLEOTIDE SEQUENCE [LARGE SCALE GENOMIC DNA]</scope>
    <source>
        <strain>UCH-1/proctitis</strain>
    </source>
</reference>
<comment type="function">
    <text evidence="1">Catalyzes the N-acylation of UDP-3-O-acylglucosamine using 3-hydroxyacyl-ACP as the acyl donor. Is involved in the biosynthesis of lipid A, a phosphorylated glycolipid that anchors the lipopolysaccharide to the outer membrane of the cell.</text>
</comment>
<comment type="catalytic activity">
    <reaction evidence="1">
        <text>a UDP-3-O-[(3R)-3-hydroxyacyl]-alpha-D-glucosamine + a (3R)-hydroxyacyl-[ACP] = a UDP-2-N,3-O-bis[(3R)-3-hydroxyacyl]-alpha-D-glucosamine + holo-[ACP] + H(+)</text>
        <dbReference type="Rhea" id="RHEA:53836"/>
        <dbReference type="Rhea" id="RHEA-COMP:9685"/>
        <dbReference type="Rhea" id="RHEA-COMP:9945"/>
        <dbReference type="ChEBI" id="CHEBI:15378"/>
        <dbReference type="ChEBI" id="CHEBI:64479"/>
        <dbReference type="ChEBI" id="CHEBI:78827"/>
        <dbReference type="ChEBI" id="CHEBI:137740"/>
        <dbReference type="ChEBI" id="CHEBI:137748"/>
        <dbReference type="EC" id="2.3.1.191"/>
    </reaction>
</comment>
<comment type="pathway">
    <text evidence="1">Bacterial outer membrane biogenesis; LPS lipid A biosynthesis.</text>
</comment>
<comment type="subunit">
    <text evidence="1">Homotrimer.</text>
</comment>
<comment type="similarity">
    <text evidence="1">Belongs to the transferase hexapeptide repeat family. LpxD subfamily.</text>
</comment>
<keyword id="KW-0012">Acyltransferase</keyword>
<keyword id="KW-0441">Lipid A biosynthesis</keyword>
<keyword id="KW-0444">Lipid biosynthesis</keyword>
<keyword id="KW-0443">Lipid metabolism</keyword>
<keyword id="KW-0677">Repeat</keyword>
<keyword id="KW-0808">Transferase</keyword>
<protein>
    <recommendedName>
        <fullName evidence="1">UDP-3-O-acylglucosamine N-acyltransferase</fullName>
        <ecNumber evidence="1">2.3.1.191</ecNumber>
    </recommendedName>
</protein>
<sequence length="354" mass="38431">MSRSTYSLEQLADFLKVEFQGNGATLLSGVEEIEEAKTAHITFLDNEKYAKHLKSSEAGAIIISRTQFQKYRDLNKNFLITSESPSLVFQKCLELFITPVDSGFPGIHPTAVIHPTAIIEDHVCIEPYAVVCQHAHVGSACHIGSGSVIGAYSTVGQHSYIHPRVVIRERVSIGKRVIIQPGAVIGSCGFGYVTSAFGQHKHLKHLGKVIIEDDVEIGANTTIDRGRFKHSVVREGSKIDNLVQIAHQVEVGQHSMIVAQAGIAGSTKIGNHVIIGGQAGITGHICIADHVIMMAQTGVTKSITSPGIYGGAPARPYQEIHRQVAKVRNLPRLEERIAALEKLVQKLEALSEQH</sequence>
<organism>
    <name type="scientific">Chlamydia trachomatis serovar L2b (strain UCH-1/proctitis)</name>
    <dbReference type="NCBI Taxonomy" id="471473"/>
    <lineage>
        <taxon>Bacteria</taxon>
        <taxon>Pseudomonadati</taxon>
        <taxon>Chlamydiota</taxon>
        <taxon>Chlamydiia</taxon>
        <taxon>Chlamydiales</taxon>
        <taxon>Chlamydiaceae</taxon>
        <taxon>Chlamydia/Chlamydophila group</taxon>
        <taxon>Chlamydia</taxon>
    </lineage>
</organism>
<proteinExistence type="inferred from homology"/>
<feature type="chain" id="PRO_1000127670" description="UDP-3-O-acylglucosamine N-acyltransferase">
    <location>
        <begin position="1"/>
        <end position="354"/>
    </location>
</feature>
<feature type="active site" description="Proton acceptor" evidence="1">
    <location>
        <position position="247"/>
    </location>
</feature>
<gene>
    <name evidence="1" type="primary">lpxD</name>
    <name type="ordered locus">CTLon_0491</name>
</gene>
<name>LPXD_CHLTB</name>
<evidence type="ECO:0000255" key="1">
    <source>
        <dbReference type="HAMAP-Rule" id="MF_00523"/>
    </source>
</evidence>